<dbReference type="EC" id="1.-.-.-" evidence="10"/>
<dbReference type="EMBL" id="JN186799">
    <property type="protein sequence ID" value="AET79192.1"/>
    <property type="status" value="ALT_INIT"/>
    <property type="molecule type" value="Genomic_DNA"/>
</dbReference>
<dbReference type="EMBL" id="CAGA01000020">
    <property type="protein sequence ID" value="CCE30231.1"/>
    <property type="molecule type" value="Genomic_DNA"/>
</dbReference>
<dbReference type="SMR" id="M1W0X9"/>
<dbReference type="STRING" id="1111077.M1W0X9"/>
<dbReference type="VEuPathDB" id="FungiDB:CPUR_04079"/>
<dbReference type="eggNOG" id="ENOG502QQWK">
    <property type="taxonomic scope" value="Eukaryota"/>
</dbReference>
<dbReference type="HOGENOM" id="CLU_018354_4_4_1"/>
<dbReference type="OrthoDB" id="9983560at2759"/>
<dbReference type="BioCyc" id="MetaCyc:MONOMER-17449"/>
<dbReference type="UniPathway" id="UPA00327"/>
<dbReference type="Proteomes" id="UP000016801">
    <property type="component" value="Unassembled WGS sequence"/>
</dbReference>
<dbReference type="GO" id="GO:0071949">
    <property type="term" value="F:FAD binding"/>
    <property type="evidence" value="ECO:0007669"/>
    <property type="project" value="InterPro"/>
</dbReference>
<dbReference type="GO" id="GO:0016491">
    <property type="term" value="F:oxidoreductase activity"/>
    <property type="evidence" value="ECO:0007669"/>
    <property type="project" value="UniProtKB-KW"/>
</dbReference>
<dbReference type="GO" id="GO:0035835">
    <property type="term" value="P:indole alkaloid biosynthetic process"/>
    <property type="evidence" value="ECO:0007669"/>
    <property type="project" value="UniProtKB-UniPathway"/>
</dbReference>
<dbReference type="Gene3D" id="3.30.465.10">
    <property type="match status" value="2"/>
</dbReference>
<dbReference type="InterPro" id="IPR012951">
    <property type="entry name" value="BBE"/>
</dbReference>
<dbReference type="InterPro" id="IPR016166">
    <property type="entry name" value="FAD-bd_PCMH"/>
</dbReference>
<dbReference type="InterPro" id="IPR036318">
    <property type="entry name" value="FAD-bd_PCMH-like_sf"/>
</dbReference>
<dbReference type="InterPro" id="IPR016169">
    <property type="entry name" value="FAD-bd_PCMH_sub2"/>
</dbReference>
<dbReference type="InterPro" id="IPR050416">
    <property type="entry name" value="FAD-linked_Oxidoreductase"/>
</dbReference>
<dbReference type="InterPro" id="IPR006094">
    <property type="entry name" value="Oxid_FAD_bind_N"/>
</dbReference>
<dbReference type="PANTHER" id="PTHR42973">
    <property type="entry name" value="BINDING OXIDOREDUCTASE, PUTATIVE (AFU_ORTHOLOGUE AFUA_1G17690)-RELATED"/>
    <property type="match status" value="1"/>
</dbReference>
<dbReference type="PANTHER" id="PTHR42973:SF39">
    <property type="entry name" value="FAD-BINDING PCMH-TYPE DOMAIN-CONTAINING PROTEIN"/>
    <property type="match status" value="1"/>
</dbReference>
<dbReference type="Pfam" id="PF08031">
    <property type="entry name" value="BBE"/>
    <property type="match status" value="1"/>
</dbReference>
<dbReference type="Pfam" id="PF01565">
    <property type="entry name" value="FAD_binding_4"/>
    <property type="match status" value="1"/>
</dbReference>
<dbReference type="SUPFAM" id="SSF56176">
    <property type="entry name" value="FAD-binding/transporter-associated domain-like"/>
    <property type="match status" value="1"/>
</dbReference>
<dbReference type="PROSITE" id="PS51387">
    <property type="entry name" value="FAD_PCMH"/>
    <property type="match status" value="1"/>
</dbReference>
<protein>
    <recommendedName>
        <fullName evidence="15">FAD-linked oxidoreductase easE</fullName>
        <ecNumber evidence="10">1.-.-.-</ecNumber>
    </recommendedName>
    <alternativeName>
        <fullName evidence="16">Chanoclavine I synthase</fullName>
    </alternativeName>
    <alternativeName>
        <fullName evidence="17">Ergot alkaloid synthesis protein E</fullName>
    </alternativeName>
    <alternativeName>
        <fullName evidence="15">Oxidoreductase 1</fullName>
    </alternativeName>
</protein>
<comment type="function">
    <text evidence="1 3 4 5 6 7 8 9 10 11 12 13 14 19 20">FAD-linked oxidoreductase; part of the gene cluster that mediates the biosynthesis of fungal ergot alkaloid (PubMed:10071219, PubMed:14700635, PubMed:14732265, PubMed:15904941, PubMed:17308187, PubMed:17720822). DmaW catalyzes the first step of ergot alkaloid biosynthesis by condensing dimethylallyl diphosphate (DMAP) and tryptophan to form 4-dimethylallyl-L-tryptophan (PubMed:14732265). The second step is catalyzed by the methyltransferase easF that methylates 4-dimethylallyl-L-tryptophan in the presence of S-adenosyl-L-methionine, resulting in the formation of 4-dimethylallyl-L-abrine (By similarity). The catalase easC and the FAD-dependent oxidoreductase easE then transform 4-dimethylallyl-L-abrine to chanoclavine-I which is further oxidized by easD in the presence of NAD(+), resulting in the formation of chanoclavine-I aldehyde (PubMed:20118373, PubMed:21409592). Agroclavine dehydrogenase easG then mediates the conversion of chanoclavine-I aldehyde to agroclavine via a non-enzymatic adduct reaction: the substrate is an iminium intermediate that is formed spontaneously from chanoclavine-I aldehyde in the presence of glutathione (PubMed:20735127, PubMed:21494745). The presence of easA is not required to complete this reaction (PubMed:21494745). Further conversion of agroclavine to paspalic acid is a two-step process involving oxidation of agroclavine to elymoclavine and of elymoclavine to paspalic acid, the second step being performed by the elymoclavine oxidase cloA (PubMed:16538694, PubMed:17720822). Paspalic acid is then further converted to D-lysergic acid (PubMed:15904941). Ergopeptines are assembled from D-lysergic acid and three different amino acids by the D-lysergyl-peptide-synthetases composed each of a monomudular and a trimodular nonribosomal peptide synthetase subunit (PubMed:14700635, PubMed:15904941). LpsB and lpsC encode the monomodular subunits responsible for D-lysergic acid activation and incorporation into the ergopeptine backbone (PubMed:14700635). LpsA1 and A2 subunits encode the trimodular nonribosomal peptide synthetase assembling the tripeptide portion of ergopeptines (PubMed:14700635). LpsA1 is responsible for formation of the major ergopeptine, ergotamine, and lpsA2 for alpha-ergocryptine, the minor ergopeptine of the total alkaloid mixture elaborated by C.purpurea (PubMed:17560817, PubMed:19139103). D-lysergyl-tripeptides are assembled by the nonribosomal peptide synthetases and released as N-(D-lysergyl-aminoacyl)-lactams (PubMed:24361048). Cyclolization of the D-lysergyl-tripeptides is performed by the Fe(2+)/2-ketoglutarate-dependent dioxygenase easH which introduces a hydroxyl group into N-(D-lysergyl-aminoacyl)-lactam at alpha-C of the aminoacyl residue followed by spontaneous condensation with the terminal lactam carbonyl group (PubMed:24361048).</text>
</comment>
<comment type="cofactor">
    <cofactor evidence="18">
        <name>FAD</name>
        <dbReference type="ChEBI" id="CHEBI:57692"/>
    </cofactor>
</comment>
<comment type="pathway">
    <text evidence="10">Alkaloid biosynthesis; ergot alkaloid biosynthesis.</text>
</comment>
<comment type="disruption phenotype">
    <text evidence="10">Abolishes the production of clavine alkaloids but also of more complex alkaloids such as ergopeptines (PubMed:20118373). Accumulates N-methyl-dimethylallyltryptophan (Me-DMAT) and traces of dimethylallyltryptophan (DMAT) (PubMed:20118373).</text>
</comment>
<comment type="similarity">
    <text evidence="18">Belongs to the oxygen-dependent FAD-linked oxidoreductase family.</text>
</comment>
<comment type="sequence caution" evidence="18">
    <conflict type="erroneous initiation">
        <sequence resource="EMBL-CDS" id="AET79192"/>
    </conflict>
    <text>Extended N-terminus.</text>
</comment>
<gene>
    <name evidence="17" type="primary">easE</name>
    <name evidence="16" type="synonym">ccsA</name>
    <name evidence="15" type="synonym">cpox1</name>
    <name type="ORF">CPUR_04079</name>
</gene>
<evidence type="ECO:0000250" key="1">
    <source>
        <dbReference type="UniProtKB" id="Q50EL0"/>
    </source>
</evidence>
<evidence type="ECO:0000255" key="2">
    <source>
        <dbReference type="PROSITE-ProRule" id="PRU00718"/>
    </source>
</evidence>
<evidence type="ECO:0000269" key="3">
    <source>
    </source>
</evidence>
<evidence type="ECO:0000269" key="4">
    <source>
    </source>
</evidence>
<evidence type="ECO:0000269" key="5">
    <source>
    </source>
</evidence>
<evidence type="ECO:0000269" key="6">
    <source>
    </source>
</evidence>
<evidence type="ECO:0000269" key="7">
    <source>
    </source>
</evidence>
<evidence type="ECO:0000269" key="8">
    <source>
    </source>
</evidence>
<evidence type="ECO:0000269" key="9">
    <source>
    </source>
</evidence>
<evidence type="ECO:0000269" key="10">
    <source>
    </source>
</evidence>
<evidence type="ECO:0000269" key="11">
    <source>
    </source>
</evidence>
<evidence type="ECO:0000269" key="12">
    <source>
    </source>
</evidence>
<evidence type="ECO:0000269" key="13">
    <source>
    </source>
</evidence>
<evidence type="ECO:0000269" key="14">
    <source>
    </source>
</evidence>
<evidence type="ECO:0000303" key="15">
    <source>
    </source>
</evidence>
<evidence type="ECO:0000303" key="16">
    <source>
    </source>
</evidence>
<evidence type="ECO:0000303" key="17">
    <source>
    </source>
</evidence>
<evidence type="ECO:0000305" key="18"/>
<evidence type="ECO:0000305" key="19">
    <source>
    </source>
</evidence>
<evidence type="ECO:0000305" key="20">
    <source>
    </source>
</evidence>
<proteinExistence type="evidence at protein level"/>
<keyword id="KW-0017">Alkaloid metabolism</keyword>
<keyword id="KW-0274">FAD</keyword>
<keyword id="KW-0285">Flavoprotein</keyword>
<keyword id="KW-0560">Oxidoreductase</keyword>
<keyword id="KW-1185">Reference proteome</keyword>
<accession>M1W0X9</accession>
<accession>G8GV65</accession>
<reference key="1">
    <citation type="submission" date="2011-06" db="EMBL/GenBank/DDBJ databases">
        <authorList>
            <person name="Florea S."/>
            <person name="Oeser B."/>
            <person name="Tudzynski P."/>
            <person name="Schardl C.L."/>
        </authorList>
    </citation>
    <scope>NUCLEOTIDE SEQUENCE [GENOMIC DNA]</scope>
    <source>
        <strain>20.1</strain>
    </source>
</reference>
<reference key="2">
    <citation type="journal article" date="2013" name="PLoS Genet.">
        <title>Plant-symbiotic fungi as chemical engineers: Multi-genome analysis of the Clavicipitaceae reveals dynamics of alkaloid loci.</title>
        <authorList>
            <person name="Schardl C.L."/>
            <person name="Young C.A."/>
            <person name="Hesse U."/>
            <person name="Amyotte S.G."/>
            <person name="Andreeva K."/>
            <person name="Calie P.J."/>
            <person name="Fleetwood D.J."/>
            <person name="Haws D.C."/>
            <person name="Moore N."/>
            <person name="Oeser B."/>
            <person name="Panaccione D.G."/>
            <person name="Schweri K.K."/>
            <person name="Voisey C.R."/>
            <person name="Farman M.L."/>
            <person name="Jaromczyk J.W."/>
            <person name="Roe B.A."/>
            <person name="O'Sullivan D.M."/>
            <person name="Scott B."/>
            <person name="Tudzynski P."/>
            <person name="An Z."/>
            <person name="Arnaoudova E.G."/>
            <person name="Bullock C.T."/>
            <person name="Charlton N.D."/>
            <person name="Chen L."/>
            <person name="Cox M."/>
            <person name="Dinkins R.D."/>
            <person name="Florea S."/>
            <person name="Glenn A.E."/>
            <person name="Gordon A."/>
            <person name="Gueldener U."/>
            <person name="Harris D.R."/>
            <person name="Hollin W."/>
            <person name="Jaromczyk J."/>
            <person name="Johnson R.D."/>
            <person name="Khan A.K."/>
            <person name="Leistner E."/>
            <person name="Leuchtmann A."/>
            <person name="Li C."/>
            <person name="Liu J."/>
            <person name="Liu J."/>
            <person name="Liu M."/>
            <person name="Mace W."/>
            <person name="Machado C."/>
            <person name="Nagabhyru P."/>
            <person name="Pan J."/>
            <person name="Schmid J."/>
            <person name="Sugawara K."/>
            <person name="Steiner U."/>
            <person name="Takach J.E."/>
            <person name="Tanaka E."/>
            <person name="Webb J.S."/>
            <person name="Wilson E.V."/>
            <person name="Wiseman J.L."/>
            <person name="Yoshida R."/>
            <person name="Zeng Z."/>
        </authorList>
    </citation>
    <scope>NUCLEOTIDE SEQUENCE [LARGE SCALE GENOMIC DNA]</scope>
    <source>
        <strain>20.1</strain>
    </source>
</reference>
<reference key="3">
    <citation type="journal article" date="1999" name="Mol. Gen. Genet.">
        <title>Evidence for an ergot alkaloid gene cluster in Claviceps purpurea.</title>
        <authorList>
            <person name="Tudzynski P."/>
            <person name="Hoelter K."/>
            <person name="Correia T.H."/>
            <person name="Arntz C."/>
            <person name="Grammel N."/>
            <person name="Keller U."/>
        </authorList>
    </citation>
    <scope>IDENTIFICATION IN THE EAS CLUSTER</scope>
    <scope>FUNCTION</scope>
    <source>
        <strain>P1 / 1029/N5</strain>
    </source>
</reference>
<reference key="4">
    <citation type="journal article" date="2001" name="Appl. Microbiol. Biotechnol.">
        <title>Biotechnology and genetics of ergot alkaloids.</title>
        <authorList>
            <person name="Tudzynski P."/>
            <person name="Correia T."/>
            <person name="Keller U."/>
        </authorList>
    </citation>
    <scope>BIOTECHNOLOGY</scope>
    <source>
        <strain>P1 / 1029/N5</strain>
    </source>
</reference>
<reference key="5">
    <citation type="journal article" date="2003" name="Chem. Biol.">
        <title>Molecular cloning and analysis of the ergopeptine assembly system in the ergot fungus Claviceps purpurea.</title>
        <authorList>
            <person name="Correia T."/>
            <person name="Grammel N."/>
            <person name="Ortel I."/>
            <person name="Keller U."/>
            <person name="Tudzynski P."/>
        </authorList>
    </citation>
    <scope>FUNCTION</scope>
</reference>
<reference key="6">
    <citation type="journal article" date="2004" name="Fungal Genet. Biol.">
        <title>The determinant step in ergot alkaloid biosynthesis by an endophyte of perennial ryegrass.</title>
        <authorList>
            <person name="Wang J."/>
            <person name="Machado C."/>
            <person name="Panaccione D.G."/>
            <person name="Tsai H.-F."/>
            <person name="Schardl C.L."/>
        </authorList>
    </citation>
    <scope>FUNCTION</scope>
    <source>
        <strain>ATCC 20102 / Farmitalia FI 32/17</strain>
    </source>
</reference>
<reference key="7">
    <citation type="journal article" date="2005" name="Phytochemistry">
        <title>The ergot alkaloid gene cluster in Claviceps purpurea: extension of the cluster sequence and intra species evolution.</title>
        <authorList>
            <person name="Haarmann T."/>
            <person name="Machado C."/>
            <person name="Lubbe Y."/>
            <person name="Correia T."/>
            <person name="Schardl C.L."/>
            <person name="Panaccione D.G."/>
            <person name="Tudzynski P."/>
        </authorList>
    </citation>
    <scope>FUNCTION</scope>
    <scope>IDENTIFICATION IN THE EAS CLUSTER</scope>
</reference>
<reference key="8">
    <citation type="journal article" date="2006" name="ChemBioChem">
        <title>Identification of the cytochrome P450 monooxygenase that bridges the clavine and ergoline alkaloid pathways.</title>
        <authorList>
            <person name="Haarmann T."/>
            <person name="Ortel I."/>
            <person name="Tudzynski P."/>
            <person name="Keller U."/>
        </authorList>
    </citation>
    <scope>FUNCTION</scope>
    <source>
        <strain>P1 / 1029/N5</strain>
    </source>
</reference>
<reference key="9">
    <citation type="journal article" date="2007" name="Appl. Environ. Microbiol.">
        <title>A complex ergovaline gene cluster in epichloe endophytes of grasses.</title>
        <authorList>
            <person name="Fleetwood D.J."/>
            <person name="Scott B."/>
            <person name="Lane G.A."/>
            <person name="Tanaka A."/>
            <person name="Johnson R.D."/>
        </authorList>
    </citation>
    <scope>FUNCTION</scope>
</reference>
<reference key="10">
    <citation type="journal article" date="2007" name="Appl. Environ. Microbiol.">
        <title>Comparison of ergot alkaloid biosynthesis gene clusters in Claviceps species indicates loss of late pathway steps in evolution of C. fusiformis.</title>
        <authorList>
            <person name="Lorenz N."/>
            <person name="Wilson E.V."/>
            <person name="Machado C."/>
            <person name="Schardl C.L."/>
            <person name="Tudzynski P."/>
        </authorList>
    </citation>
    <scope>FUNCTION</scope>
</reference>
<reference key="11">
    <citation type="journal article" date="2008" name="Fungal Genet. Biol.">
        <title>Use of a nonhomologous end joining deficient strain (Deltaku70) of the ergot fungus Claviceps purpurea for identification of a nonribosomal peptide synthetase gene involved in ergotamine biosynthesis.</title>
        <authorList>
            <person name="Haarmann T."/>
            <person name="Lorenz N."/>
            <person name="Tudzynski P."/>
        </authorList>
    </citation>
    <scope>FUNCTION</scope>
</reference>
<reference key="12">
    <citation type="journal article" date="2009" name="J. Biol. Chem.">
        <title>Combinatorial assembly of simple and complex D-lysergic acid alkaloid peptide classes in the ergot fungus Claviceps purpurea.</title>
        <authorList>
            <person name="Ortel I."/>
            <person name="Keller U."/>
        </authorList>
    </citation>
    <scope>FUNCTION</scope>
</reference>
<reference key="13">
    <citation type="journal article" date="2010" name="Appl. Environ. Microbiol.">
        <title>Alkaloid cluster gene ccsA of the ergot fungus Claviceps purpurea encodes chanoclavine I synthase, a flavin adenine dinucleotide-containing oxidoreductase mediating the transformation of N-methyl-dimethylallyltryptophan to chanoclavine I.</title>
        <authorList>
            <person name="Lorenz N."/>
            <person name="Olsovska J."/>
            <person name="Sulc M."/>
            <person name="Tudzynski P."/>
        </authorList>
    </citation>
    <scope>FUNCTION</scope>
    <scope>DISRUPTION PHENOTYPE</scope>
    <scope>CATALYTIC ACTIVITY</scope>
    <scope>PATHWAY</scope>
</reference>
<reference key="14">
    <citation type="journal article" date="2010" name="J. Am. Chem. Soc.">
        <title>Controlling a structural branch point in ergot alkaloid biosynthesis.</title>
        <authorList>
            <person name="Cheng J.Z."/>
            <person name="Coyle C.M."/>
            <person name="Panaccione D.G."/>
            <person name="O'Connor S.E."/>
        </authorList>
    </citation>
    <scope>FUNCTION</scope>
    <source>
        <strain>ATCC 20102 / Farmitalia FI 32/17</strain>
    </source>
</reference>
<reference key="15">
    <citation type="journal article" date="2011" name="Curr. Genet.">
        <title>Ergot cluster-encoded catalase is required for synthesis of chanoclavine-I in Aspergillus fumigatus.</title>
        <authorList>
            <person name="Goetz K.E."/>
            <person name="Coyle C.M."/>
            <person name="Cheng J.Z."/>
            <person name="O'Connor S.E."/>
            <person name="Panaccione D.G."/>
        </authorList>
    </citation>
    <scope>FUNCTION</scope>
</reference>
<reference key="16">
    <citation type="journal article" date="2011" name="Org. Biomol. Chem.">
        <title>New insights into ergot alkaloid biosynthesis in Claviceps purpurea: an agroclavine synthase EasG catalyses, via a non-enzymatic adduct with reduced glutathione, the conversion of chanoclavine-I aldehyde to agroclavine.</title>
        <authorList>
            <person name="Matuschek M."/>
            <person name="Wallwey C."/>
            <person name="Xie X."/>
            <person name="Li S.M."/>
        </authorList>
    </citation>
    <scope>FUNCTION</scope>
</reference>
<reference key="17">
    <citation type="journal article" date="2014" name="Chem. Biol.">
        <title>Cyclolization of D-lysergic acid alkaloid peptides.</title>
        <authorList>
            <person name="Havemann J."/>
            <person name="Vogel D."/>
            <person name="Loll B."/>
            <person name="Keller U."/>
        </authorList>
    </citation>
    <scope>FUNCTION</scope>
</reference>
<sequence length="483" mass="52072">MERRQSICPQGRLPFYSAVVRSTSDIQASVRFASRHNLRLVIKNTGHDSAGRSSAPHSFQIHTSLLQNISLHKNFIARGSTTGRGPAVTLGAGVMQWQAYVHGAKNGYTILGGECPTVGAIGGFLQGGGVSSIHSFTRGLAVDQVLEYQVVSAKGDLITANEDNNQDLFWALKGGGGGTFGVVTEATVRVFSDDPVTVTSTKIEAAAANVLFWKEGVHELLRLLQRFNNLHVAGQLVISAPTKDSLQAGLELHFANLTDETQAIQLLRSEARALETHGISASTSVRVQRKASSELRMKPDLYPPHYGILEASVLISAATFHANDGPALIASKLSGLTLKPNDILFTSNLGGRVSENTAIEIALHPAWREAAQLVTLVRVVEPSIEGKLSALNDLTARDVPILYSIDPAAKISYRNLGDPQEKEFQARYWGADNYARLAATKAAWDPSHLFMTSLGVGSEVWDAEGICRKRRGFRAKASSLIGM</sequence>
<name>EASE_CLAP2</name>
<organism>
    <name type="scientific">Claviceps purpurea (strain 20.1)</name>
    <name type="common">Ergot fungus</name>
    <name type="synonym">Sphacelia segetum</name>
    <dbReference type="NCBI Taxonomy" id="1111077"/>
    <lineage>
        <taxon>Eukaryota</taxon>
        <taxon>Fungi</taxon>
        <taxon>Dikarya</taxon>
        <taxon>Ascomycota</taxon>
        <taxon>Pezizomycotina</taxon>
        <taxon>Sordariomycetes</taxon>
        <taxon>Hypocreomycetidae</taxon>
        <taxon>Hypocreales</taxon>
        <taxon>Clavicipitaceae</taxon>
        <taxon>Claviceps</taxon>
    </lineage>
</organism>
<feature type="chain" id="PRO_0000439133" description="FAD-linked oxidoreductase easE">
    <location>
        <begin position="1"/>
        <end position="483"/>
    </location>
</feature>
<feature type="domain" description="FAD-binding PCMH-type" evidence="2">
    <location>
        <begin position="10"/>
        <end position="193"/>
    </location>
</feature>